<organism>
    <name type="scientific">Shewanella oneidensis (strain ATCC 700550 / JCM 31522 / CIP 106686 / LMG 19005 / NCIMB 14063 / MR-1)</name>
    <dbReference type="NCBI Taxonomy" id="211586"/>
    <lineage>
        <taxon>Bacteria</taxon>
        <taxon>Pseudomonadati</taxon>
        <taxon>Pseudomonadota</taxon>
        <taxon>Gammaproteobacteria</taxon>
        <taxon>Alteromonadales</taxon>
        <taxon>Shewanellaceae</taxon>
        <taxon>Shewanella</taxon>
    </lineage>
</organism>
<protein>
    <recommendedName>
        <fullName evidence="1">7-cyano-7-deazaguanine synthase</fullName>
        <ecNumber evidence="1">6.3.4.20</ecNumber>
    </recommendedName>
    <alternativeName>
        <fullName evidence="1">7-cyano-7-carbaguanine synthase</fullName>
    </alternativeName>
    <alternativeName>
        <fullName evidence="1">PreQ(0) synthase</fullName>
    </alternativeName>
    <alternativeName>
        <fullName evidence="1">Queuosine biosynthesis protein QueC</fullName>
    </alternativeName>
</protein>
<feature type="chain" id="PRO_0000246921" description="7-cyano-7-deazaguanine synthase">
    <location>
        <begin position="1"/>
        <end position="238"/>
    </location>
</feature>
<feature type="binding site" evidence="1">
    <location>
        <begin position="12"/>
        <end position="22"/>
    </location>
    <ligand>
        <name>ATP</name>
        <dbReference type="ChEBI" id="CHEBI:30616"/>
    </ligand>
</feature>
<feature type="binding site" evidence="1">
    <location>
        <position position="191"/>
    </location>
    <ligand>
        <name>Zn(2+)</name>
        <dbReference type="ChEBI" id="CHEBI:29105"/>
    </ligand>
</feature>
<feature type="binding site" evidence="1">
    <location>
        <position position="200"/>
    </location>
    <ligand>
        <name>Zn(2+)</name>
        <dbReference type="ChEBI" id="CHEBI:29105"/>
    </ligand>
</feature>
<feature type="binding site" evidence="1">
    <location>
        <position position="203"/>
    </location>
    <ligand>
        <name>Zn(2+)</name>
        <dbReference type="ChEBI" id="CHEBI:29105"/>
    </ligand>
</feature>
<feature type="binding site" evidence="1">
    <location>
        <position position="206"/>
    </location>
    <ligand>
        <name>Zn(2+)</name>
        <dbReference type="ChEBI" id="CHEBI:29105"/>
    </ligand>
</feature>
<comment type="function">
    <text evidence="1">Catalyzes the ATP-dependent conversion of 7-carboxy-7-deazaguanine (CDG) to 7-cyano-7-deazaguanine (preQ(0)).</text>
</comment>
<comment type="catalytic activity">
    <reaction evidence="1">
        <text>7-carboxy-7-deazaguanine + NH4(+) + ATP = 7-cyano-7-deazaguanine + ADP + phosphate + H2O + H(+)</text>
        <dbReference type="Rhea" id="RHEA:27982"/>
        <dbReference type="ChEBI" id="CHEBI:15377"/>
        <dbReference type="ChEBI" id="CHEBI:15378"/>
        <dbReference type="ChEBI" id="CHEBI:28938"/>
        <dbReference type="ChEBI" id="CHEBI:30616"/>
        <dbReference type="ChEBI" id="CHEBI:43474"/>
        <dbReference type="ChEBI" id="CHEBI:45075"/>
        <dbReference type="ChEBI" id="CHEBI:61036"/>
        <dbReference type="ChEBI" id="CHEBI:456216"/>
        <dbReference type="EC" id="6.3.4.20"/>
    </reaction>
</comment>
<comment type="cofactor">
    <cofactor evidence="1">
        <name>Zn(2+)</name>
        <dbReference type="ChEBI" id="CHEBI:29105"/>
    </cofactor>
    <text evidence="1">Binds 1 zinc ion per subunit.</text>
</comment>
<comment type="pathway">
    <text evidence="1">Purine metabolism; 7-cyano-7-deazaguanine biosynthesis.</text>
</comment>
<comment type="similarity">
    <text evidence="1">Belongs to the QueC family.</text>
</comment>
<accession>Q8EE85</accession>
<reference key="1">
    <citation type="journal article" date="2002" name="Nat. Biotechnol.">
        <title>Genome sequence of the dissimilatory metal ion-reducing bacterium Shewanella oneidensis.</title>
        <authorList>
            <person name="Heidelberg J.F."/>
            <person name="Paulsen I.T."/>
            <person name="Nelson K.E."/>
            <person name="Gaidos E.J."/>
            <person name="Nelson W.C."/>
            <person name="Read T.D."/>
            <person name="Eisen J.A."/>
            <person name="Seshadri R."/>
            <person name="Ward N.L."/>
            <person name="Methe B.A."/>
            <person name="Clayton R.A."/>
            <person name="Meyer T."/>
            <person name="Tsapin A."/>
            <person name="Scott J."/>
            <person name="Beanan M.J."/>
            <person name="Brinkac L.M."/>
            <person name="Daugherty S.C."/>
            <person name="DeBoy R.T."/>
            <person name="Dodson R.J."/>
            <person name="Durkin A.S."/>
            <person name="Haft D.H."/>
            <person name="Kolonay J.F."/>
            <person name="Madupu R."/>
            <person name="Peterson J.D."/>
            <person name="Umayam L.A."/>
            <person name="White O."/>
            <person name="Wolf A.M."/>
            <person name="Vamathevan J.J."/>
            <person name="Weidman J.F."/>
            <person name="Impraim M."/>
            <person name="Lee K."/>
            <person name="Berry K.J."/>
            <person name="Lee C."/>
            <person name="Mueller J."/>
            <person name="Khouri H.M."/>
            <person name="Gill J."/>
            <person name="Utterback T.R."/>
            <person name="McDonald L.A."/>
            <person name="Feldblyum T.V."/>
            <person name="Smith H.O."/>
            <person name="Venter J.C."/>
            <person name="Nealson K.H."/>
            <person name="Fraser C.M."/>
        </authorList>
    </citation>
    <scope>NUCLEOTIDE SEQUENCE [LARGE SCALE GENOMIC DNA]</scope>
    <source>
        <strain>ATCC 700550 / JCM 31522 / CIP 106686 / LMG 19005 / NCIMB 14063 / MR-1</strain>
    </source>
</reference>
<sequence>MSASVSKVVVVFSGGQDSTTCLIQALTQYDEVHGITFDYGQRHREEIDVAKSLAQRLNITSHKVMDVSLLNELAISALTRDAIPVSHELMENGLPNTFVPGRNILFLTLAGIYAYQLGAEAIITGVCETDFSGYPDCRHDFVRAMESALVQGMDKKLNIITPLMWLNKAQTWALADKYQQLDLVRHHTLTCYNGIVGDGCGDCPACHLRQRGLDDYLQNKSAVMASLTQAIETGKPQA</sequence>
<dbReference type="EC" id="6.3.4.20" evidence="1"/>
<dbReference type="EMBL" id="AE014299">
    <property type="protein sequence ID" value="AAN55534.1"/>
    <property type="molecule type" value="Genomic_DNA"/>
</dbReference>
<dbReference type="RefSeq" id="NP_718090.1">
    <property type="nucleotide sequence ID" value="NC_004347.2"/>
</dbReference>
<dbReference type="RefSeq" id="WP_011072467.1">
    <property type="nucleotide sequence ID" value="NC_004347.2"/>
</dbReference>
<dbReference type="SMR" id="Q8EE85"/>
<dbReference type="STRING" id="211586.SO_2503"/>
<dbReference type="PaxDb" id="211586-SO_2503"/>
<dbReference type="KEGG" id="son:SO_2503"/>
<dbReference type="PATRIC" id="fig|211586.12.peg.2410"/>
<dbReference type="eggNOG" id="COG0603">
    <property type="taxonomic scope" value="Bacteria"/>
</dbReference>
<dbReference type="HOGENOM" id="CLU_081854_0_0_6"/>
<dbReference type="OrthoDB" id="9789567at2"/>
<dbReference type="PhylomeDB" id="Q8EE85"/>
<dbReference type="BioCyc" id="SONE211586:G1GMP-2290-MONOMER"/>
<dbReference type="UniPathway" id="UPA00391"/>
<dbReference type="Proteomes" id="UP000008186">
    <property type="component" value="Chromosome"/>
</dbReference>
<dbReference type="GO" id="GO:0005524">
    <property type="term" value="F:ATP binding"/>
    <property type="evidence" value="ECO:0007669"/>
    <property type="project" value="UniProtKB-UniRule"/>
</dbReference>
<dbReference type="GO" id="GO:0016879">
    <property type="term" value="F:ligase activity, forming carbon-nitrogen bonds"/>
    <property type="evidence" value="ECO:0007669"/>
    <property type="project" value="UniProtKB-UniRule"/>
</dbReference>
<dbReference type="GO" id="GO:0008270">
    <property type="term" value="F:zinc ion binding"/>
    <property type="evidence" value="ECO:0007669"/>
    <property type="project" value="UniProtKB-UniRule"/>
</dbReference>
<dbReference type="GO" id="GO:0008616">
    <property type="term" value="P:queuosine biosynthetic process"/>
    <property type="evidence" value="ECO:0007669"/>
    <property type="project" value="UniProtKB-UniRule"/>
</dbReference>
<dbReference type="CDD" id="cd01995">
    <property type="entry name" value="QueC-like"/>
    <property type="match status" value="1"/>
</dbReference>
<dbReference type="FunFam" id="3.40.50.620:FF:000017">
    <property type="entry name" value="7-cyano-7-deazaguanine synthase"/>
    <property type="match status" value="1"/>
</dbReference>
<dbReference type="Gene3D" id="3.40.50.620">
    <property type="entry name" value="HUPs"/>
    <property type="match status" value="1"/>
</dbReference>
<dbReference type="HAMAP" id="MF_01633">
    <property type="entry name" value="QueC"/>
    <property type="match status" value="1"/>
</dbReference>
<dbReference type="InterPro" id="IPR018317">
    <property type="entry name" value="QueC"/>
</dbReference>
<dbReference type="InterPro" id="IPR014729">
    <property type="entry name" value="Rossmann-like_a/b/a_fold"/>
</dbReference>
<dbReference type="NCBIfam" id="TIGR00364">
    <property type="entry name" value="7-cyano-7-deazaguanine synthase QueC"/>
    <property type="match status" value="1"/>
</dbReference>
<dbReference type="NCBIfam" id="NF008317">
    <property type="entry name" value="PRK11106.1"/>
    <property type="match status" value="1"/>
</dbReference>
<dbReference type="PANTHER" id="PTHR42914">
    <property type="entry name" value="7-CYANO-7-DEAZAGUANINE SYNTHASE"/>
    <property type="match status" value="1"/>
</dbReference>
<dbReference type="PANTHER" id="PTHR42914:SF1">
    <property type="entry name" value="7-CYANO-7-DEAZAGUANINE SYNTHASE"/>
    <property type="match status" value="1"/>
</dbReference>
<dbReference type="Pfam" id="PF06508">
    <property type="entry name" value="QueC"/>
    <property type="match status" value="1"/>
</dbReference>
<dbReference type="PIRSF" id="PIRSF006293">
    <property type="entry name" value="ExsB"/>
    <property type="match status" value="1"/>
</dbReference>
<dbReference type="SUPFAM" id="SSF52402">
    <property type="entry name" value="Adenine nucleotide alpha hydrolases-like"/>
    <property type="match status" value="1"/>
</dbReference>
<proteinExistence type="inferred from homology"/>
<evidence type="ECO:0000255" key="1">
    <source>
        <dbReference type="HAMAP-Rule" id="MF_01633"/>
    </source>
</evidence>
<gene>
    <name evidence="1" type="primary">queC</name>
    <name type="ordered locus">SO_2503</name>
</gene>
<name>QUEC_SHEON</name>
<keyword id="KW-0067">ATP-binding</keyword>
<keyword id="KW-0436">Ligase</keyword>
<keyword id="KW-0479">Metal-binding</keyword>
<keyword id="KW-0547">Nucleotide-binding</keyword>
<keyword id="KW-0671">Queuosine biosynthesis</keyword>
<keyword id="KW-1185">Reference proteome</keyword>
<keyword id="KW-0862">Zinc</keyword>